<feature type="chain" id="PRO_0000356163" description="Ragulator complex protein LAMTOR3">
    <location>
        <begin position="1"/>
        <end position="124"/>
    </location>
</feature>
<proteinExistence type="evidence at transcript level"/>
<evidence type="ECO:0000250" key="1">
    <source>
        <dbReference type="UniProtKB" id="O88653"/>
    </source>
</evidence>
<evidence type="ECO:0000250" key="2">
    <source>
        <dbReference type="UniProtKB" id="Q9UHA4"/>
    </source>
</evidence>
<evidence type="ECO:0000305" key="3"/>
<gene>
    <name type="primary">lamtor3</name>
</gene>
<sequence length="124" mass="13721">MADDLKRYLYKQLQSVEGLHAIVVTDRDGVPVIKVANDNAPVHALRPGFLSTFALATDQGSKLGLSKNKSIICYYNTYQIVQFNRLPLVISFIASSNANTGLIMSLEKELAPLIEELRQVVEVT</sequence>
<comment type="function">
    <text evidence="2">As part of the Ragulator complex it is involved in amino acid sensing and activation of mTORC1, a signaling complex promoting cell growth in response to growth factors, energy levels, and amino acids. Activated by amino acids through a mechanism involving the lysosomal V-ATPase, the Ragulator plays a dual role for the small GTPases Rag (RagA/RRAGA, RagB/RRAGB, RagC/RRAGC and/or RagD/RRAGD): it (1) acts as a guanine nucleotide exchange factor (GEF), activating the small GTPases Rag and (2) mediates recruitment of Rag GTPases to the lysosome membrane. Activated Ragulator and Rag GTPases function as a scaffold recruiting mTORC1 to lysosomes where it is in turn activated.</text>
</comment>
<comment type="subunit">
    <text evidence="1 2">Part of the Ragulator complex composed of lamtor1, lamtor2, lamtor3, lamtor4 and lamtor5. The Ragulator complex interacts with slc38a9; the probable amino acid sensor.</text>
</comment>
<comment type="subcellular location">
    <subcellularLocation>
        <location evidence="1">Late endosome membrane</location>
        <topology evidence="1">Peripheral membrane protein</topology>
        <orientation evidence="1">Cytoplasmic side</orientation>
    </subcellularLocation>
    <text evidence="1">Recruited to lysosome and endosome membranes by LAMTOR1.</text>
</comment>
<comment type="similarity">
    <text evidence="3">Belongs to the LAMTOR3 family.</text>
</comment>
<organism>
    <name type="scientific">Pagrus major</name>
    <name type="common">Red sea bream</name>
    <name type="synonym">Chrysophrys major</name>
    <dbReference type="NCBI Taxonomy" id="143350"/>
    <lineage>
        <taxon>Eukaryota</taxon>
        <taxon>Metazoa</taxon>
        <taxon>Chordata</taxon>
        <taxon>Craniata</taxon>
        <taxon>Vertebrata</taxon>
        <taxon>Euteleostomi</taxon>
        <taxon>Actinopterygii</taxon>
        <taxon>Neopterygii</taxon>
        <taxon>Teleostei</taxon>
        <taxon>Neoteleostei</taxon>
        <taxon>Acanthomorphata</taxon>
        <taxon>Eupercaria</taxon>
        <taxon>Spariformes</taxon>
        <taxon>Sparidae</taxon>
        <taxon>Pagrus</taxon>
    </lineage>
</organism>
<keyword id="KW-0967">Endosome</keyword>
<keyword id="KW-0472">Membrane</keyword>
<accession>Q6Y228</accession>
<protein>
    <recommendedName>
        <fullName>Ragulator complex protein LAMTOR3</fullName>
    </recommendedName>
    <alternativeName>
        <fullName>Late endosomal/lysosomal adaptor and MAPK and MTOR activator 3</fullName>
    </alternativeName>
</protein>
<dbReference type="EMBL" id="AY190710">
    <property type="protein sequence ID" value="AAP20185.1"/>
    <property type="molecule type" value="mRNA"/>
</dbReference>
<dbReference type="SMR" id="Q6Y228"/>
<dbReference type="GO" id="GO:0031902">
    <property type="term" value="C:late endosome membrane"/>
    <property type="evidence" value="ECO:0007669"/>
    <property type="project" value="UniProtKB-SubCell"/>
</dbReference>
<dbReference type="GO" id="GO:0005765">
    <property type="term" value="C:lysosomal membrane"/>
    <property type="evidence" value="ECO:0000250"/>
    <property type="project" value="UniProtKB"/>
</dbReference>
<dbReference type="GO" id="GO:0071986">
    <property type="term" value="C:Ragulator complex"/>
    <property type="evidence" value="ECO:0000250"/>
    <property type="project" value="UniProtKB"/>
</dbReference>
<dbReference type="GO" id="GO:0071230">
    <property type="term" value="P:cellular response to amino acid stimulus"/>
    <property type="evidence" value="ECO:0000250"/>
    <property type="project" value="UniProtKB"/>
</dbReference>
<dbReference type="GO" id="GO:0032008">
    <property type="term" value="P:positive regulation of TOR signaling"/>
    <property type="evidence" value="ECO:0000250"/>
    <property type="project" value="UniProtKB"/>
</dbReference>
<dbReference type="GO" id="GO:1904263">
    <property type="term" value="P:positive regulation of TORC1 signaling"/>
    <property type="evidence" value="ECO:0000250"/>
    <property type="project" value="UniProtKB"/>
</dbReference>
<dbReference type="GO" id="GO:0008104">
    <property type="term" value="P:protein localization"/>
    <property type="evidence" value="ECO:0000250"/>
    <property type="project" value="UniProtKB"/>
</dbReference>
<dbReference type="FunFam" id="3.30.450.30:FF:000003">
    <property type="entry name" value="ragulator complex protein LAMTOR3 homolog"/>
    <property type="match status" value="1"/>
</dbReference>
<dbReference type="Gene3D" id="3.30.450.30">
    <property type="entry name" value="Dynein light chain 2a, cytoplasmic"/>
    <property type="match status" value="1"/>
</dbReference>
<dbReference type="InterPro" id="IPR015019">
    <property type="entry name" value="LAMTOR3"/>
</dbReference>
<dbReference type="PANTHER" id="PTHR13378:SF1">
    <property type="entry name" value="RAGULATOR COMPLEX PROTEIN LAMTOR3"/>
    <property type="match status" value="1"/>
</dbReference>
<dbReference type="PANTHER" id="PTHR13378">
    <property type="entry name" value="REGULATOR COMPLEX PROTEIN LAMTOR3"/>
    <property type="match status" value="1"/>
</dbReference>
<dbReference type="Pfam" id="PF08923">
    <property type="entry name" value="MAPKK1_Int"/>
    <property type="match status" value="1"/>
</dbReference>
<dbReference type="SMART" id="SM01278">
    <property type="entry name" value="MAPKK1_Int"/>
    <property type="match status" value="1"/>
</dbReference>
<dbReference type="SUPFAM" id="SSF103196">
    <property type="entry name" value="Roadblock/LC7 domain"/>
    <property type="match status" value="1"/>
</dbReference>
<reference key="1">
    <citation type="journal article" date="2004" name="Aquaculture">
        <title>Analysis of immune-relevant genes expressed in red sea bream spleen.</title>
        <authorList>
            <person name="Chen S.-L."/>
            <person name="Xu M.-Y."/>
            <person name="Hu S.-L."/>
            <person name="Li L."/>
        </authorList>
        <dbReference type="AGRICOLA" id="IND43674139"/>
    </citation>
    <scope>NUCLEOTIDE SEQUENCE [LARGE SCALE MRNA]</scope>
</reference>
<name>LTOR3_PAGMA</name>